<feature type="initiator methionine" description="Removed" evidence="1">
    <location>
        <position position="1"/>
    </location>
</feature>
<feature type="chain" id="PRO_0000391620" description="Lectin MVL">
    <location>
        <begin position="2"/>
        <end position="114"/>
    </location>
</feature>
<feature type="repeat" description="1">
    <location>
        <begin position="2"/>
        <end position="55"/>
    </location>
</feature>
<feature type="repeat" description="2">
    <location>
        <begin position="61"/>
        <end position="114"/>
    </location>
</feature>
<feature type="region of interest" description="Linker">
    <location>
        <begin position="56"/>
        <end position="60"/>
    </location>
</feature>
<feature type="binding site">
    <location>
        <begin position="12"/>
        <end position="16"/>
    </location>
    <ligand>
        <name>a carbohydrate</name>
        <dbReference type="ChEBI" id="CHEBI:16646"/>
        <label>1</label>
    </ligand>
</feature>
<feature type="binding site">
    <location>
        <position position="20"/>
    </location>
    <ligand>
        <name>a carbohydrate</name>
        <dbReference type="ChEBI" id="CHEBI:16646"/>
        <label>1</label>
    </ligand>
</feature>
<feature type="binding site">
    <location>
        <begin position="36"/>
        <end position="44"/>
    </location>
    <ligand>
        <name>a carbohydrate</name>
        <dbReference type="ChEBI" id="CHEBI:16646"/>
        <label>1</label>
    </ligand>
</feature>
<feature type="binding site">
    <location>
        <begin position="71"/>
        <end position="75"/>
    </location>
    <ligand>
        <name>a carbohydrate</name>
        <dbReference type="ChEBI" id="CHEBI:16646"/>
        <label>2</label>
    </ligand>
</feature>
<feature type="binding site">
    <location>
        <position position="79"/>
    </location>
    <ligand>
        <name>a carbohydrate</name>
        <dbReference type="ChEBI" id="CHEBI:16646"/>
        <label>2</label>
    </ligand>
</feature>
<feature type="binding site">
    <location>
        <begin position="95"/>
        <end position="103"/>
    </location>
    <ligand>
        <name>a carbohydrate</name>
        <dbReference type="ChEBI" id="CHEBI:16646"/>
        <label>2</label>
    </ligand>
</feature>
<feature type="mutagenesis site" description="Loss of N-acetyl-beta-glucosaminidase activity. No effect on anti-HIV activity." evidence="4">
    <original>D</original>
    <variation>A</variation>
    <location>
        <position position="76"/>
    </location>
</feature>
<feature type="strand" evidence="6">
    <location>
        <begin position="3"/>
        <end position="11"/>
    </location>
</feature>
<feature type="helix" evidence="6">
    <location>
        <begin position="16"/>
        <end position="29"/>
    </location>
</feature>
<feature type="strand" evidence="6">
    <location>
        <begin position="33"/>
        <end position="42"/>
    </location>
</feature>
<feature type="turn" evidence="6">
    <location>
        <begin position="43"/>
        <end position="45"/>
    </location>
</feature>
<feature type="strand" evidence="6">
    <location>
        <begin position="46"/>
        <end position="56"/>
    </location>
</feature>
<feature type="strand" evidence="6">
    <location>
        <begin position="60"/>
        <end position="70"/>
    </location>
</feature>
<feature type="helix" evidence="6">
    <location>
        <begin position="75"/>
        <end position="87"/>
    </location>
</feature>
<feature type="turn" evidence="6">
    <location>
        <begin position="88"/>
        <end position="90"/>
    </location>
</feature>
<feature type="strand" evidence="6">
    <location>
        <begin position="91"/>
        <end position="101"/>
    </location>
</feature>
<feature type="turn" evidence="6">
    <location>
        <begin position="102"/>
        <end position="104"/>
    </location>
</feature>
<feature type="strand" evidence="6">
    <location>
        <begin position="105"/>
        <end position="114"/>
    </location>
</feature>
<protein>
    <recommendedName>
        <fullName>Lectin MVL</fullName>
    </recommendedName>
    <alternativeName>
        <fullName>Mannan-binding lectin</fullName>
    </alternativeName>
    <alternativeName>
        <fullName>N-acetyl-beta-glucosaminidase</fullName>
        <ecNumber>3.2.1.-</ecNumber>
    </alternativeName>
    <alternativeName>
        <fullName>Oligomannoside-binding lectin</fullName>
    </alternativeName>
</protein>
<reference key="1">
    <citation type="journal article" date="1999" name="Biochem. Biophys. Res. Commun.">
        <title>Isolation and characterization of a mannan-binding lectin from the freshwater cyanobacterium (blue-green algae) Microcystis viridis.</title>
        <authorList>
            <person name="Yamaguchi M."/>
            <person name="Ogawa T."/>
            <person name="Muramoto K."/>
            <person name="Kamio Y."/>
            <person name="Jimbo M."/>
            <person name="Kamiya H."/>
        </authorList>
    </citation>
    <scope>NUCLEOTIDE SEQUENCE [GENOMIC DNA]</scope>
    <scope>PROTEIN SEQUENCE OF 2-22</scope>
    <scope>FUNCTION</scope>
    <scope>HEMAGGLUTININATING ACTIVITY</scope>
    <scope>MANNAN-BINDING</scope>
    <scope>BIOPHYSICOCHEMICAL PROPERTIES</scope>
    <scope>SUBCELLULAR LOCATION</scope>
    <scope>INDUCTION</scope>
    <source>
        <strain>NIES-102</strain>
    </source>
</reference>
<reference key="2">
    <citation type="journal article" date="2004" name="J. Mol. Biol.">
        <title>New carbohydrate specificity and HIV-1 fusion blocking activity of the cyanobacterial protein MVL: NMR, ITC and sedimentation equilibrium studies.</title>
        <authorList>
            <person name="Bewley C.A."/>
            <person name="Cai M."/>
            <person name="Ray S."/>
            <person name="Ghirlando R."/>
            <person name="Yamaguchi M."/>
            <person name="Muramoto K."/>
        </authorList>
    </citation>
    <scope>FUNCTION AS HIV-1 INHIBITORY PROTEIN</scope>
    <scope>SUBUNIT</scope>
    <scope>CARBOHYDRATE SPECIFICITY</scope>
    <source>
        <strain>NIES-102</strain>
    </source>
</reference>
<reference key="3">
    <citation type="journal article" date="2005" name="J. Biol. Chem.">
        <title>Crystal structures of the HIV-1 inhibitory cyanobacterial protein MVL free and bound to Man3GlcNAc2: structural basis for specificity and high-affinity binding to the core pentasaccharide from n-linked oligomannoside.</title>
        <authorList>
            <person name="Williams D.C. Jr."/>
            <person name="Lee J.Y."/>
            <person name="Cai M."/>
            <person name="Bewley C.A."/>
            <person name="Clore G.M."/>
        </authorList>
    </citation>
    <scope>X-RAY CRYSTALLOGRAPHY (1.8 ANGSTROMS) OF APOPROTEIN AND IN COMPLEX WITH MAN3GLCNAC2</scope>
    <scope>SUBUNIT</scope>
    <scope>DOMAIN</scope>
</reference>
<reference key="4">
    <citation type="journal article" date="2009" name="J. Am. Chem. Soc.">
        <title>Unprecedented glycosidase activity at a lectin carbohydrate-binding site exemplified by the cyanobacterial lectin MVL.</title>
        <authorList>
            <person name="Shahzad-ul-Hussan S."/>
            <person name="Cai M."/>
            <person name="Bewley C.A."/>
        </authorList>
    </citation>
    <scope>STRUCTURE BY NMR OF MUTANT ALA-76 IN COMPLEX WITH GLCNAC3</scope>
    <scope>GLYCOSIDASE ACTIVITY</scope>
    <scope>CATALYTIC ACTIVITY</scope>
    <scope>MUTAGENESIS OF ASP-76</scope>
</reference>
<comment type="function">
    <text>Carbohydrate-binding protein that binds oligomannosides such as Man(6)GlcNAc(2) with sub-micromolar affinities. The specificity of MVL is unique in that its minimal target comprises the Man-alpha-(1-&gt;6)-Man-beta-(1-&gt;4)-GlcNAc-beta-(1-&gt;4)-GlcNAc tetrasaccharide core (Man(2)A) found in N-linked oligomannosides. Displays hemagglutininating activity on rabbit, horse and hen erythrocytes. This activity is inhibited by yeast mannan. Does not bind mono- and disaccharides. Inhibits HIV-1 envelope-mediated cell fusion at nanomolar concentrations through carbohydrate-mediated interactions with high-mannose residues on the surface of the HIV envelope glycoprotein gp120.</text>
</comment>
<comment type="function">
    <text evidence="4">Unexpectedly for a lectin, one of the 2 oligomannose binding sites of MVL can catalyze the cleavage of chitin fragments (such as chitotriose, i.e. GlcNAc(3) or GlcNAc-beta-(1-&gt;4)-GlcNAcbeta-(1-&gt;4)-GlcNAc, and chitotetraose, i.e. GlcNAc(4)) to GlcNAc. This weak beta-1,4-glycosidase activity is restricted to the C-terminal carbohydrate-binding site. Does not cleave Man(3)GlcNAc(2) or the tetrasaccharide Man(2)A.</text>
</comment>
<comment type="biophysicochemical properties">
    <phDependence>
        <text evidence="1">Displays hemagglutinating activity from pH 5 to 8, but is inactive beyond these pHs.</text>
    </phDependence>
    <temperatureDependence>
        <text evidence="1">Half the hemagglutinating activity is maintained by heating at 50 degrees Celsius for 3 hours. Is inactive by heating at 60 degrees Celsius for 10 minutes.</text>
    </temperatureDependence>
</comment>
<comment type="subunit">
    <text evidence="2 3 4">Homodimer.</text>
</comment>
<comment type="subcellular location">
    <subcellularLocation>
        <location evidence="5">Cytoplasm</location>
    </subcellularLocation>
</comment>
<comment type="induction">
    <text evidence="1">Induced under low nutrient or anoxic conditions.</text>
</comment>
<comment type="domain">
    <text evidence="3">Each monomer contains 2 structurally homologous domains with high sequence similarity connected by a short five-amino acid residue linker. Intriguingly, a water-filled channel is observed between the 2 monomers.</text>
</comment>
<comment type="miscellaneous">
    <text>Binds 2 carbohydrate molecules per monomer. The 2 symmetrically related-binding sites exhibit similar affinities relative to one other.</text>
</comment>
<comment type="miscellaneous">
    <text>The structural studies suggest catalysis likely occurs through proton relay via a 'proton wire'.</text>
</comment>
<evidence type="ECO:0000269" key="1">
    <source>
    </source>
</evidence>
<evidence type="ECO:0000269" key="2">
    <source>
    </source>
</evidence>
<evidence type="ECO:0000269" key="3">
    <source>
    </source>
</evidence>
<evidence type="ECO:0000269" key="4">
    <source>
    </source>
</evidence>
<evidence type="ECO:0000305" key="5">
    <source>
    </source>
</evidence>
<evidence type="ECO:0007829" key="6">
    <source>
        <dbReference type="PDB" id="1ZHS"/>
    </source>
</evidence>
<name>MVL_MICVR</name>
<keyword id="KW-0002">3D-structure</keyword>
<keyword id="KW-0930">Antiviral protein</keyword>
<keyword id="KW-0963">Cytoplasm</keyword>
<keyword id="KW-0903">Direct protein sequencing</keyword>
<keyword id="KW-0326">Glycosidase</keyword>
<keyword id="KW-0348">Hemagglutinin</keyword>
<keyword id="KW-0378">Hydrolase</keyword>
<keyword id="KW-0430">Lectin</keyword>
<keyword id="KW-0677">Repeat</keyword>
<organism>
    <name type="scientific">Microcystis viridis</name>
    <name type="common">Polycystis viridis</name>
    <dbReference type="NCBI Taxonomy" id="44822"/>
    <lineage>
        <taxon>Bacteria</taxon>
        <taxon>Bacillati</taxon>
        <taxon>Cyanobacteriota</taxon>
        <taxon>Cyanophyceae</taxon>
        <taxon>Oscillatoriophycideae</taxon>
        <taxon>Chroococcales</taxon>
        <taxon>Microcystaceae</taxon>
        <taxon>Microcystis</taxon>
    </lineage>
</organism>
<proteinExistence type="evidence at protein level"/>
<sequence>MASYKVNIPAGPLWSNAEAQQVGPKIAAAHQGNFTGQWTTVVESAMSVVEVELQVENTGIHEFKTDVLAGPLWSNDEAQKLGPQIAASYGAEFTGQWRTIVEGVMSVIQIKYTF</sequence>
<gene>
    <name type="primary">mvl</name>
</gene>
<accession>Q9RHG4</accession>
<dbReference type="EC" id="3.2.1.-"/>
<dbReference type="EMBL" id="AB036699">
    <property type="protein sequence ID" value="BAA89413.1"/>
    <property type="molecule type" value="Genomic_DNA"/>
</dbReference>
<dbReference type="PDB" id="1ZHQ">
    <property type="method" value="X-ray"/>
    <property type="resolution" value="1.90 A"/>
    <property type="chains" value="A/B/C/D/E/F/G/H=2-114"/>
</dbReference>
<dbReference type="PDB" id="1ZHS">
    <property type="method" value="X-ray"/>
    <property type="resolution" value="1.80 A"/>
    <property type="chains" value="A/B/C/D/E/F/G/H=2-114"/>
</dbReference>
<dbReference type="PDBsum" id="1ZHQ"/>
<dbReference type="PDBsum" id="1ZHS"/>
<dbReference type="SMR" id="Q9RHG4"/>
<dbReference type="UniLectin" id="Q9RHG4"/>
<dbReference type="EvolutionaryTrace" id="Q9RHG4"/>
<dbReference type="GO" id="GO:0005737">
    <property type="term" value="C:cytoplasm"/>
    <property type="evidence" value="ECO:0007669"/>
    <property type="project" value="UniProtKB-SubCell"/>
</dbReference>
<dbReference type="GO" id="GO:0030246">
    <property type="term" value="F:carbohydrate binding"/>
    <property type="evidence" value="ECO:0007669"/>
    <property type="project" value="UniProtKB-KW"/>
</dbReference>
<dbReference type="GO" id="GO:0016798">
    <property type="term" value="F:hydrolase activity, acting on glycosyl bonds"/>
    <property type="evidence" value="ECO:0007669"/>
    <property type="project" value="UniProtKB-KW"/>
</dbReference>
<dbReference type="GO" id="GO:0050688">
    <property type="term" value="P:regulation of defense response to virus"/>
    <property type="evidence" value="ECO:0007669"/>
    <property type="project" value="UniProtKB-KW"/>
</dbReference>
<dbReference type="Gene3D" id="3.30.1490.230">
    <property type="match status" value="2"/>
</dbReference>
<dbReference type="InterPro" id="IPR021992">
    <property type="entry name" value="MVL"/>
</dbReference>
<dbReference type="InterPro" id="IPR053754">
    <property type="entry name" value="OligoMan_bind_ChitinaseAct_sf"/>
</dbReference>
<dbReference type="Pfam" id="PF12151">
    <property type="entry name" value="MVL"/>
    <property type="match status" value="1"/>
</dbReference>